<feature type="chain" id="PRO_0000254265" description="ATP synthase subunit beta">
    <location>
        <begin position="1"/>
        <end position="479"/>
    </location>
</feature>
<feature type="binding site" evidence="1">
    <location>
        <begin position="168"/>
        <end position="175"/>
    </location>
    <ligand>
        <name>ATP</name>
        <dbReference type="ChEBI" id="CHEBI:30616"/>
    </ligand>
</feature>
<organism>
    <name type="scientific">Frankia casuarinae (strain DSM 45818 / CECT 9043 / HFP020203 / CcI3)</name>
    <dbReference type="NCBI Taxonomy" id="106370"/>
    <lineage>
        <taxon>Bacteria</taxon>
        <taxon>Bacillati</taxon>
        <taxon>Actinomycetota</taxon>
        <taxon>Actinomycetes</taxon>
        <taxon>Frankiales</taxon>
        <taxon>Frankiaceae</taxon>
        <taxon>Frankia</taxon>
    </lineage>
</organism>
<protein>
    <recommendedName>
        <fullName evidence="1">ATP synthase subunit beta</fullName>
        <ecNumber evidence="1">7.1.2.2</ecNumber>
    </recommendedName>
    <alternativeName>
        <fullName evidence="1">ATP synthase F1 sector subunit beta</fullName>
    </alternativeName>
    <alternativeName>
        <fullName evidence="1">F-ATPase subunit beta</fullName>
    </alternativeName>
</protein>
<accession>Q2J6N3</accession>
<gene>
    <name evidence="1" type="primary">atpD</name>
    <name type="ordered locus">Francci3_3707</name>
</gene>
<reference key="1">
    <citation type="journal article" date="2007" name="Genome Res.">
        <title>Genome characteristics of facultatively symbiotic Frankia sp. strains reflect host range and host plant biogeography.</title>
        <authorList>
            <person name="Normand P."/>
            <person name="Lapierre P."/>
            <person name="Tisa L.S."/>
            <person name="Gogarten J.P."/>
            <person name="Alloisio N."/>
            <person name="Bagnarol E."/>
            <person name="Bassi C.A."/>
            <person name="Berry A.M."/>
            <person name="Bickhart D.M."/>
            <person name="Choisne N."/>
            <person name="Couloux A."/>
            <person name="Cournoyer B."/>
            <person name="Cruveiller S."/>
            <person name="Daubin V."/>
            <person name="Demange N."/>
            <person name="Francino M.P."/>
            <person name="Goltsman E."/>
            <person name="Huang Y."/>
            <person name="Kopp O.R."/>
            <person name="Labarre L."/>
            <person name="Lapidus A."/>
            <person name="Lavire C."/>
            <person name="Marechal J."/>
            <person name="Martinez M."/>
            <person name="Mastronunzio J.E."/>
            <person name="Mullin B.C."/>
            <person name="Niemann J."/>
            <person name="Pujic P."/>
            <person name="Rawnsley T."/>
            <person name="Rouy Z."/>
            <person name="Schenowitz C."/>
            <person name="Sellstedt A."/>
            <person name="Tavares F."/>
            <person name="Tomkins J.P."/>
            <person name="Vallenet D."/>
            <person name="Valverde C."/>
            <person name="Wall L.G."/>
            <person name="Wang Y."/>
            <person name="Medigue C."/>
            <person name="Benson D.R."/>
        </authorList>
    </citation>
    <scope>NUCLEOTIDE SEQUENCE [LARGE SCALE GENOMIC DNA]</scope>
    <source>
        <strain>DSM 45818 / CECT 9043 / HFP020203 / CcI3</strain>
    </source>
</reference>
<sequence>MTVTTSSPATAPGRTPGIGRVARVIGPVVDVEFAPDELPEIYQALQVDRTIGDETLTLTLEVAQHIGDNTVRAISMQQTDGLVRGAPVHDTGAPISVPVGDATKGHVFNVLGTPLDVKQIEAETYWPIHRSAPAFDQLESKTEMFTTGIKVIDLLAPYVRGGKIGLFGGAGVGKTVIIQEMIRRVAKEFGGVSVFAGVGERTREGNDLFLEMTEAGVIEDTALVFGQMDEPPGTRLRVALGALTMAEYFRDVQKQDVLLFIDNIFRFTQAGSEVSTLLGRMPSAVGYQPTLADEMGVLQERITSTRGHSITSLQAIYVPADDLTDPAPATTFTHLDATTVLDRAISDLGIYPAVSPLDSNSRILDARYLGQEHYDTAREVQRILQRYKDLQDIIAILGIDELSEEDKILVNRARRIQRFLSQPFFVAEQFTGIPGKFVPLDETIDSFKRLTQGDFDHLPEQAFFMCGGIEDAEKNAENL</sequence>
<dbReference type="EC" id="7.1.2.2" evidence="1"/>
<dbReference type="EMBL" id="CP000249">
    <property type="protein sequence ID" value="ABD13059.1"/>
    <property type="molecule type" value="Genomic_DNA"/>
</dbReference>
<dbReference type="RefSeq" id="WP_011438083.1">
    <property type="nucleotide sequence ID" value="NZ_JENI01000016.1"/>
</dbReference>
<dbReference type="SMR" id="Q2J6N3"/>
<dbReference type="STRING" id="106370.Francci3_3707"/>
<dbReference type="KEGG" id="fra:Francci3_3707"/>
<dbReference type="eggNOG" id="COG0055">
    <property type="taxonomic scope" value="Bacteria"/>
</dbReference>
<dbReference type="HOGENOM" id="CLU_022398_0_2_11"/>
<dbReference type="OrthoDB" id="9801639at2"/>
<dbReference type="PhylomeDB" id="Q2J6N3"/>
<dbReference type="Proteomes" id="UP000001937">
    <property type="component" value="Chromosome"/>
</dbReference>
<dbReference type="GO" id="GO:0005886">
    <property type="term" value="C:plasma membrane"/>
    <property type="evidence" value="ECO:0007669"/>
    <property type="project" value="UniProtKB-SubCell"/>
</dbReference>
<dbReference type="GO" id="GO:0045259">
    <property type="term" value="C:proton-transporting ATP synthase complex"/>
    <property type="evidence" value="ECO:0007669"/>
    <property type="project" value="UniProtKB-KW"/>
</dbReference>
<dbReference type="GO" id="GO:0005524">
    <property type="term" value="F:ATP binding"/>
    <property type="evidence" value="ECO:0007669"/>
    <property type="project" value="UniProtKB-UniRule"/>
</dbReference>
<dbReference type="GO" id="GO:0016887">
    <property type="term" value="F:ATP hydrolysis activity"/>
    <property type="evidence" value="ECO:0007669"/>
    <property type="project" value="InterPro"/>
</dbReference>
<dbReference type="GO" id="GO:0046933">
    <property type="term" value="F:proton-transporting ATP synthase activity, rotational mechanism"/>
    <property type="evidence" value="ECO:0007669"/>
    <property type="project" value="UniProtKB-UniRule"/>
</dbReference>
<dbReference type="CDD" id="cd18110">
    <property type="entry name" value="ATP-synt_F1_beta_C"/>
    <property type="match status" value="1"/>
</dbReference>
<dbReference type="CDD" id="cd18115">
    <property type="entry name" value="ATP-synt_F1_beta_N"/>
    <property type="match status" value="1"/>
</dbReference>
<dbReference type="CDD" id="cd01133">
    <property type="entry name" value="F1-ATPase_beta_CD"/>
    <property type="match status" value="1"/>
</dbReference>
<dbReference type="FunFam" id="1.10.1140.10:FF:000001">
    <property type="entry name" value="ATP synthase subunit beta"/>
    <property type="match status" value="1"/>
</dbReference>
<dbReference type="FunFam" id="2.40.10.170:FF:000005">
    <property type="entry name" value="ATP synthase subunit beta"/>
    <property type="match status" value="1"/>
</dbReference>
<dbReference type="FunFam" id="3.40.50.300:FF:000004">
    <property type="entry name" value="ATP synthase subunit beta"/>
    <property type="match status" value="1"/>
</dbReference>
<dbReference type="Gene3D" id="2.40.10.170">
    <property type="match status" value="1"/>
</dbReference>
<dbReference type="Gene3D" id="1.10.1140.10">
    <property type="entry name" value="Bovine Mitochondrial F1-atpase, Atp Synthase Beta Chain, Chain D, domain 3"/>
    <property type="match status" value="1"/>
</dbReference>
<dbReference type="Gene3D" id="3.40.50.300">
    <property type="entry name" value="P-loop containing nucleotide triphosphate hydrolases"/>
    <property type="match status" value="1"/>
</dbReference>
<dbReference type="HAMAP" id="MF_01347">
    <property type="entry name" value="ATP_synth_beta_bact"/>
    <property type="match status" value="1"/>
</dbReference>
<dbReference type="InterPro" id="IPR003593">
    <property type="entry name" value="AAA+_ATPase"/>
</dbReference>
<dbReference type="InterPro" id="IPR055190">
    <property type="entry name" value="ATP-synt_VA_C"/>
</dbReference>
<dbReference type="InterPro" id="IPR005722">
    <property type="entry name" value="ATP_synth_F1_bsu"/>
</dbReference>
<dbReference type="InterPro" id="IPR050053">
    <property type="entry name" value="ATPase_alpha/beta_chains"/>
</dbReference>
<dbReference type="InterPro" id="IPR004100">
    <property type="entry name" value="ATPase_F1/V1/A1_a/bsu_N"/>
</dbReference>
<dbReference type="InterPro" id="IPR036121">
    <property type="entry name" value="ATPase_F1/V1/A1_a/bsu_N_sf"/>
</dbReference>
<dbReference type="InterPro" id="IPR000194">
    <property type="entry name" value="ATPase_F1/V1/A1_a/bsu_nucl-bd"/>
</dbReference>
<dbReference type="InterPro" id="IPR024034">
    <property type="entry name" value="ATPase_F1/V1_b/a_C"/>
</dbReference>
<dbReference type="InterPro" id="IPR027417">
    <property type="entry name" value="P-loop_NTPase"/>
</dbReference>
<dbReference type="NCBIfam" id="TIGR01039">
    <property type="entry name" value="atpD"/>
    <property type="match status" value="1"/>
</dbReference>
<dbReference type="PANTHER" id="PTHR15184">
    <property type="entry name" value="ATP SYNTHASE"/>
    <property type="match status" value="1"/>
</dbReference>
<dbReference type="PANTHER" id="PTHR15184:SF71">
    <property type="entry name" value="ATP SYNTHASE SUBUNIT BETA, MITOCHONDRIAL"/>
    <property type="match status" value="1"/>
</dbReference>
<dbReference type="Pfam" id="PF00006">
    <property type="entry name" value="ATP-synt_ab"/>
    <property type="match status" value="1"/>
</dbReference>
<dbReference type="Pfam" id="PF02874">
    <property type="entry name" value="ATP-synt_ab_N"/>
    <property type="match status" value="1"/>
</dbReference>
<dbReference type="Pfam" id="PF22919">
    <property type="entry name" value="ATP-synt_VA_C"/>
    <property type="match status" value="1"/>
</dbReference>
<dbReference type="SMART" id="SM00382">
    <property type="entry name" value="AAA"/>
    <property type="match status" value="1"/>
</dbReference>
<dbReference type="SUPFAM" id="SSF47917">
    <property type="entry name" value="C-terminal domain of alpha and beta subunits of F1 ATP synthase"/>
    <property type="match status" value="1"/>
</dbReference>
<dbReference type="SUPFAM" id="SSF50615">
    <property type="entry name" value="N-terminal domain of alpha and beta subunits of F1 ATP synthase"/>
    <property type="match status" value="1"/>
</dbReference>
<dbReference type="SUPFAM" id="SSF52540">
    <property type="entry name" value="P-loop containing nucleoside triphosphate hydrolases"/>
    <property type="match status" value="1"/>
</dbReference>
<evidence type="ECO:0000255" key="1">
    <source>
        <dbReference type="HAMAP-Rule" id="MF_01347"/>
    </source>
</evidence>
<keyword id="KW-0066">ATP synthesis</keyword>
<keyword id="KW-0067">ATP-binding</keyword>
<keyword id="KW-1003">Cell membrane</keyword>
<keyword id="KW-0139">CF(1)</keyword>
<keyword id="KW-0375">Hydrogen ion transport</keyword>
<keyword id="KW-0406">Ion transport</keyword>
<keyword id="KW-0472">Membrane</keyword>
<keyword id="KW-0547">Nucleotide-binding</keyword>
<keyword id="KW-1185">Reference proteome</keyword>
<keyword id="KW-1278">Translocase</keyword>
<keyword id="KW-0813">Transport</keyword>
<name>ATPB_FRACC</name>
<proteinExistence type="inferred from homology"/>
<comment type="function">
    <text evidence="1">Produces ATP from ADP in the presence of a proton gradient across the membrane. The catalytic sites are hosted primarily by the beta subunits.</text>
</comment>
<comment type="catalytic activity">
    <reaction evidence="1">
        <text>ATP + H2O + 4 H(+)(in) = ADP + phosphate + 5 H(+)(out)</text>
        <dbReference type="Rhea" id="RHEA:57720"/>
        <dbReference type="ChEBI" id="CHEBI:15377"/>
        <dbReference type="ChEBI" id="CHEBI:15378"/>
        <dbReference type="ChEBI" id="CHEBI:30616"/>
        <dbReference type="ChEBI" id="CHEBI:43474"/>
        <dbReference type="ChEBI" id="CHEBI:456216"/>
        <dbReference type="EC" id="7.1.2.2"/>
    </reaction>
</comment>
<comment type="subunit">
    <text evidence="1">F-type ATPases have 2 components, CF(1) - the catalytic core - and CF(0) - the membrane proton channel. CF(1) has five subunits: alpha(3), beta(3), gamma(1), delta(1), epsilon(1). CF(0) has three main subunits: a(1), b(2) and c(9-12). The alpha and beta chains form an alternating ring which encloses part of the gamma chain. CF(1) is attached to CF(0) by a central stalk formed by the gamma and epsilon chains, while a peripheral stalk is formed by the delta and b chains.</text>
</comment>
<comment type="subcellular location">
    <subcellularLocation>
        <location evidence="1">Cell membrane</location>
        <topology evidence="1">Peripheral membrane protein</topology>
    </subcellularLocation>
</comment>
<comment type="similarity">
    <text evidence="1">Belongs to the ATPase alpha/beta chains family.</text>
</comment>